<reference key="1">
    <citation type="journal article" date="2009" name="Proc. Natl. Acad. Sci. U.S.A.">
        <title>Biogeography of the Sulfolobus islandicus pan-genome.</title>
        <authorList>
            <person name="Reno M.L."/>
            <person name="Held N.L."/>
            <person name="Fields C.J."/>
            <person name="Burke P.V."/>
            <person name="Whitaker R.J."/>
        </authorList>
    </citation>
    <scope>NUCLEOTIDE SEQUENCE [LARGE SCALE GENOMIC DNA]</scope>
    <source>
        <strain>M.16.27</strain>
    </source>
</reference>
<dbReference type="EMBL" id="CP001401">
    <property type="protein sequence ID" value="ACP55369.1"/>
    <property type="molecule type" value="Genomic_DNA"/>
</dbReference>
<dbReference type="RefSeq" id="WP_012711435.1">
    <property type="nucleotide sequence ID" value="NC_012632.1"/>
</dbReference>
<dbReference type="SMR" id="C3N5U4"/>
<dbReference type="KEGG" id="sim:M1627_1487"/>
<dbReference type="HOGENOM" id="CLU_071479_3_0_2"/>
<dbReference type="Proteomes" id="UP000002307">
    <property type="component" value="Chromosome"/>
</dbReference>
<dbReference type="GO" id="GO:0022625">
    <property type="term" value="C:cytosolic large ribosomal subunit"/>
    <property type="evidence" value="ECO:0007669"/>
    <property type="project" value="TreeGrafter"/>
</dbReference>
<dbReference type="GO" id="GO:0003735">
    <property type="term" value="F:structural constituent of ribosome"/>
    <property type="evidence" value="ECO:0007669"/>
    <property type="project" value="InterPro"/>
</dbReference>
<dbReference type="GO" id="GO:0006412">
    <property type="term" value="P:translation"/>
    <property type="evidence" value="ECO:0007669"/>
    <property type="project" value="UniProtKB-UniRule"/>
</dbReference>
<dbReference type="CDD" id="cd00513">
    <property type="entry name" value="Ribosomal_L32_L32e"/>
    <property type="match status" value="1"/>
</dbReference>
<dbReference type="HAMAP" id="MF_00810">
    <property type="entry name" value="Ribosomal_eL32"/>
    <property type="match status" value="1"/>
</dbReference>
<dbReference type="InterPro" id="IPR001515">
    <property type="entry name" value="Ribosomal_eL32"/>
</dbReference>
<dbReference type="InterPro" id="IPR023654">
    <property type="entry name" value="Ribosomal_eL32_arc"/>
</dbReference>
<dbReference type="InterPro" id="IPR018263">
    <property type="entry name" value="Ribosomal_eL32_CS"/>
</dbReference>
<dbReference type="InterPro" id="IPR036351">
    <property type="entry name" value="Ribosomal_eL32_sf"/>
</dbReference>
<dbReference type="NCBIfam" id="NF006332">
    <property type="entry name" value="PRK08562.1"/>
    <property type="match status" value="1"/>
</dbReference>
<dbReference type="PANTHER" id="PTHR23413">
    <property type="entry name" value="60S RIBOSOMAL PROTEIN L32 AND DNA-DIRECTED RNA POLYMERASE II, SUBUNIT N"/>
    <property type="match status" value="1"/>
</dbReference>
<dbReference type="PANTHER" id="PTHR23413:SF1">
    <property type="entry name" value="RIBOSOMAL PROTEIN L32"/>
    <property type="match status" value="1"/>
</dbReference>
<dbReference type="Pfam" id="PF01655">
    <property type="entry name" value="Ribosomal_L32e"/>
    <property type="match status" value="1"/>
</dbReference>
<dbReference type="SMART" id="SM01393">
    <property type="entry name" value="Ribosomal_L32e"/>
    <property type="match status" value="1"/>
</dbReference>
<dbReference type="SUPFAM" id="SSF52042">
    <property type="entry name" value="Ribosomal protein L32e"/>
    <property type="match status" value="1"/>
</dbReference>
<dbReference type="PROSITE" id="PS00580">
    <property type="entry name" value="RIBOSOMAL_L32E"/>
    <property type="match status" value="1"/>
</dbReference>
<proteinExistence type="inferred from homology"/>
<name>RL32_SACI3</name>
<sequence length="138" mass="16126">MTEEKIQSYRKKIYVIRQKLKAKKPRFLRYDSDKFFRLGRQEKWRRPYGRDNKTRLKVRGFPAIVSVGYRLPKEVRGFHPSGLRQVIVHNVNDLVKVQNQKDSVIVTIASSVGFKKRLEILNKARELGLKVSNEGVSA</sequence>
<protein>
    <recommendedName>
        <fullName evidence="1">Large ribosomal subunit protein eL32</fullName>
    </recommendedName>
    <alternativeName>
        <fullName evidence="2">50S ribosomal protein L32e</fullName>
    </alternativeName>
</protein>
<accession>C3N5U4</accession>
<evidence type="ECO:0000255" key="1">
    <source>
        <dbReference type="HAMAP-Rule" id="MF_00810"/>
    </source>
</evidence>
<evidence type="ECO:0000305" key="2"/>
<keyword id="KW-0687">Ribonucleoprotein</keyword>
<keyword id="KW-0689">Ribosomal protein</keyword>
<gene>
    <name evidence="1" type="primary">rpl32e</name>
    <name type="ordered locus">M1627_1487</name>
</gene>
<feature type="chain" id="PRO_1000213010" description="Large ribosomal subunit protein eL32">
    <location>
        <begin position="1"/>
        <end position="138"/>
    </location>
</feature>
<comment type="similarity">
    <text evidence="1">Belongs to the eukaryotic ribosomal protein eL32 family.</text>
</comment>
<organism>
    <name type="scientific">Saccharolobus islandicus (strain M.16.27)</name>
    <name type="common">Sulfolobus islandicus</name>
    <dbReference type="NCBI Taxonomy" id="427318"/>
    <lineage>
        <taxon>Archaea</taxon>
        <taxon>Thermoproteota</taxon>
        <taxon>Thermoprotei</taxon>
        <taxon>Sulfolobales</taxon>
        <taxon>Sulfolobaceae</taxon>
        <taxon>Saccharolobus</taxon>
    </lineage>
</organism>